<protein>
    <recommendedName>
        <fullName evidence="1">2,3-bisphosphoglycerate-dependent phosphoglycerate mutase</fullName>
        <shortName evidence="1">BPG-dependent PGAM</shortName>
        <shortName evidence="1">PGAM</shortName>
        <shortName evidence="1">Phosphoglyceromutase</shortName>
        <shortName evidence="1">dPGM</shortName>
        <ecNumber evidence="1">5.4.2.11</ecNumber>
    </recommendedName>
</protein>
<sequence length="250" mass="28358">MAVTKLVLVRHGESQWNNENRFTGWYDVDLSEKGRSEAKAAGKLLKDEGFTFDFAYTSVLKRAIHTLWNILDELDQAWLPTEKTWKLNERHYGALQGLNKSETAEKYGDEQVKQWRRGFAITPPALEKSDERFPGHDPRYAKLTDAELPTTESLALTIERVIPYWNDVIKPRIASGERVIIAAHGNSLRALVKYLDDLGEDEILELNIPTGVPLVYEFDENFKPIKHYYLGNADEIAAKAAAVANQGKAK</sequence>
<feature type="chain" id="PRO_0000229152" description="2,3-bisphosphoglycerate-dependent phosphoglycerate mutase">
    <location>
        <begin position="1"/>
        <end position="250"/>
    </location>
</feature>
<feature type="active site" description="Tele-phosphohistidine intermediate" evidence="1">
    <location>
        <position position="11"/>
    </location>
</feature>
<feature type="active site" description="Proton donor/acceptor" evidence="1">
    <location>
        <position position="89"/>
    </location>
</feature>
<feature type="binding site" evidence="1">
    <location>
        <begin position="10"/>
        <end position="17"/>
    </location>
    <ligand>
        <name>substrate</name>
    </ligand>
</feature>
<feature type="binding site" evidence="1">
    <location>
        <begin position="23"/>
        <end position="24"/>
    </location>
    <ligand>
        <name>substrate</name>
    </ligand>
</feature>
<feature type="binding site" evidence="1">
    <location>
        <position position="62"/>
    </location>
    <ligand>
        <name>substrate</name>
    </ligand>
</feature>
<feature type="binding site" evidence="1">
    <location>
        <begin position="89"/>
        <end position="92"/>
    </location>
    <ligand>
        <name>substrate</name>
    </ligand>
</feature>
<feature type="binding site" evidence="1">
    <location>
        <position position="100"/>
    </location>
    <ligand>
        <name>substrate</name>
    </ligand>
</feature>
<feature type="binding site" evidence="1">
    <location>
        <begin position="116"/>
        <end position="117"/>
    </location>
    <ligand>
        <name>substrate</name>
    </ligand>
</feature>
<feature type="binding site" evidence="1">
    <location>
        <begin position="185"/>
        <end position="186"/>
    </location>
    <ligand>
        <name>substrate</name>
    </ligand>
</feature>
<feature type="site" description="Transition state stabilizer" evidence="1">
    <location>
        <position position="184"/>
    </location>
</feature>
<organism>
    <name type="scientific">Yersinia pseudotuberculosis serotype I (strain IP32953)</name>
    <dbReference type="NCBI Taxonomy" id="273123"/>
    <lineage>
        <taxon>Bacteria</taxon>
        <taxon>Pseudomonadati</taxon>
        <taxon>Pseudomonadota</taxon>
        <taxon>Gammaproteobacteria</taxon>
        <taxon>Enterobacterales</taxon>
        <taxon>Yersiniaceae</taxon>
        <taxon>Yersinia</taxon>
    </lineage>
</organism>
<comment type="function">
    <text evidence="1">Catalyzes the interconversion of 2-phosphoglycerate and 3-phosphoglycerate.</text>
</comment>
<comment type="catalytic activity">
    <reaction evidence="1">
        <text>(2R)-2-phosphoglycerate = (2R)-3-phosphoglycerate</text>
        <dbReference type="Rhea" id="RHEA:15901"/>
        <dbReference type="ChEBI" id="CHEBI:58272"/>
        <dbReference type="ChEBI" id="CHEBI:58289"/>
        <dbReference type="EC" id="5.4.2.11"/>
    </reaction>
</comment>
<comment type="pathway">
    <text evidence="1">Carbohydrate degradation; glycolysis; pyruvate from D-glyceraldehyde 3-phosphate: step 3/5.</text>
</comment>
<comment type="subunit">
    <text evidence="1">Homodimer.</text>
</comment>
<comment type="similarity">
    <text evidence="1">Belongs to the phosphoglycerate mutase family. BPG-dependent PGAM subfamily.</text>
</comment>
<keyword id="KW-0312">Gluconeogenesis</keyword>
<keyword id="KW-0324">Glycolysis</keyword>
<keyword id="KW-0413">Isomerase</keyword>
<gene>
    <name evidence="1" type="primary">gpmA</name>
    <name type="ordered locus">YPTB1166</name>
</gene>
<proteinExistence type="inferred from homology"/>
<evidence type="ECO:0000255" key="1">
    <source>
        <dbReference type="HAMAP-Rule" id="MF_01039"/>
    </source>
</evidence>
<dbReference type="EC" id="5.4.2.11" evidence="1"/>
<dbReference type="EMBL" id="BX936398">
    <property type="protein sequence ID" value="CAH20406.1"/>
    <property type="molecule type" value="Genomic_DNA"/>
</dbReference>
<dbReference type="RefSeq" id="WP_002210746.1">
    <property type="nucleotide sequence ID" value="NZ_CP009712.1"/>
</dbReference>
<dbReference type="SMR" id="Q66D83"/>
<dbReference type="GeneID" id="57977273"/>
<dbReference type="KEGG" id="ypo:BZ17_1363"/>
<dbReference type="KEGG" id="yps:YPTB1166"/>
<dbReference type="PATRIC" id="fig|273123.14.peg.1455"/>
<dbReference type="UniPathway" id="UPA00109">
    <property type="reaction ID" value="UER00186"/>
</dbReference>
<dbReference type="Proteomes" id="UP000001011">
    <property type="component" value="Chromosome"/>
</dbReference>
<dbReference type="GO" id="GO:0004619">
    <property type="term" value="F:phosphoglycerate mutase activity"/>
    <property type="evidence" value="ECO:0007669"/>
    <property type="project" value="UniProtKB-EC"/>
</dbReference>
<dbReference type="GO" id="GO:0006094">
    <property type="term" value="P:gluconeogenesis"/>
    <property type="evidence" value="ECO:0007669"/>
    <property type="project" value="UniProtKB-UniRule"/>
</dbReference>
<dbReference type="GO" id="GO:0006096">
    <property type="term" value="P:glycolytic process"/>
    <property type="evidence" value="ECO:0007669"/>
    <property type="project" value="UniProtKB-UniRule"/>
</dbReference>
<dbReference type="CDD" id="cd07067">
    <property type="entry name" value="HP_PGM_like"/>
    <property type="match status" value="1"/>
</dbReference>
<dbReference type="FunFam" id="3.40.50.1240:FF:000003">
    <property type="entry name" value="2,3-bisphosphoglycerate-dependent phosphoglycerate mutase"/>
    <property type="match status" value="1"/>
</dbReference>
<dbReference type="Gene3D" id="3.40.50.1240">
    <property type="entry name" value="Phosphoglycerate mutase-like"/>
    <property type="match status" value="1"/>
</dbReference>
<dbReference type="HAMAP" id="MF_01039">
    <property type="entry name" value="PGAM_GpmA"/>
    <property type="match status" value="1"/>
</dbReference>
<dbReference type="InterPro" id="IPR013078">
    <property type="entry name" value="His_Pase_superF_clade-1"/>
</dbReference>
<dbReference type="InterPro" id="IPR029033">
    <property type="entry name" value="His_PPase_superfam"/>
</dbReference>
<dbReference type="InterPro" id="IPR001345">
    <property type="entry name" value="PG/BPGM_mutase_AS"/>
</dbReference>
<dbReference type="InterPro" id="IPR005952">
    <property type="entry name" value="Phosphogly_mut1"/>
</dbReference>
<dbReference type="NCBIfam" id="TIGR01258">
    <property type="entry name" value="pgm_1"/>
    <property type="match status" value="1"/>
</dbReference>
<dbReference type="NCBIfam" id="NF010713">
    <property type="entry name" value="PRK14115.1"/>
    <property type="match status" value="1"/>
</dbReference>
<dbReference type="PANTHER" id="PTHR11931">
    <property type="entry name" value="PHOSPHOGLYCERATE MUTASE"/>
    <property type="match status" value="1"/>
</dbReference>
<dbReference type="Pfam" id="PF00300">
    <property type="entry name" value="His_Phos_1"/>
    <property type="match status" value="1"/>
</dbReference>
<dbReference type="PIRSF" id="PIRSF000709">
    <property type="entry name" value="6PFK_2-Ptase"/>
    <property type="match status" value="1"/>
</dbReference>
<dbReference type="SMART" id="SM00855">
    <property type="entry name" value="PGAM"/>
    <property type="match status" value="1"/>
</dbReference>
<dbReference type="SUPFAM" id="SSF53254">
    <property type="entry name" value="Phosphoglycerate mutase-like"/>
    <property type="match status" value="1"/>
</dbReference>
<dbReference type="PROSITE" id="PS00175">
    <property type="entry name" value="PG_MUTASE"/>
    <property type="match status" value="1"/>
</dbReference>
<accession>Q66D83</accession>
<name>GPMA_YERPS</name>
<reference key="1">
    <citation type="journal article" date="2004" name="Proc. Natl. Acad. Sci. U.S.A.">
        <title>Insights into the evolution of Yersinia pestis through whole-genome comparison with Yersinia pseudotuberculosis.</title>
        <authorList>
            <person name="Chain P.S.G."/>
            <person name="Carniel E."/>
            <person name="Larimer F.W."/>
            <person name="Lamerdin J."/>
            <person name="Stoutland P.O."/>
            <person name="Regala W.M."/>
            <person name="Georgescu A.M."/>
            <person name="Vergez L.M."/>
            <person name="Land M.L."/>
            <person name="Motin V.L."/>
            <person name="Brubaker R.R."/>
            <person name="Fowler J."/>
            <person name="Hinnebusch J."/>
            <person name="Marceau M."/>
            <person name="Medigue C."/>
            <person name="Simonet M."/>
            <person name="Chenal-Francisque V."/>
            <person name="Souza B."/>
            <person name="Dacheux D."/>
            <person name="Elliott J.M."/>
            <person name="Derbise A."/>
            <person name="Hauser L.J."/>
            <person name="Garcia E."/>
        </authorList>
    </citation>
    <scope>NUCLEOTIDE SEQUENCE [LARGE SCALE GENOMIC DNA]</scope>
    <source>
        <strain>IP32953</strain>
    </source>
</reference>